<comment type="function">
    <text evidence="5">Substrate-recognition component of some cullin-RING-based BCR (BTB-CUL3-RBX1) E3 ubiquitin-protein ligase complexes. The BCR(KLHL17) complex mediates the ubiquitination and subsequent degradation of GLUR6. May play a role in the actin-based neuronal function.</text>
</comment>
<comment type="pathway">
    <text>Protein modification; protein ubiquitination.</text>
</comment>
<comment type="subunit">
    <text evidence="3 4 5">Interacts with F-actin; the interaction disrupts the F-actin structures and leads to marked changes of neuronal morphology. Component of a complex, composed of PDZK1, SYNGAP1, KLHL17 and NMDA receptors. Interacts directly with PDZK1 (via PDZ1 domain); the interaction is important for integrity of actin cytoskeleton structures in neurons. Interacts with DLG4 and SYNGAP1. Interacts (via kelch repeats) with GRIK2 (via C-terminus); the interaction targets GRIK2 for degradation via ubiquitin-proteasome pathway. Interacts with GRIK1. Interacts with (via BTB domain) CUL3; the interaction regulates surface GRIK2 expression.</text>
</comment>
<comment type="interaction">
    <interactant intactId="EBI-7713653">
        <id>Q8K430</id>
    </interactant>
    <interactant intactId="EBI-375655">
        <id>P31016</id>
        <label>Dlg4</label>
    </interactant>
    <organismsDiffer>false</organismsDiffer>
    <experiments>2</experiments>
</comment>
<comment type="interaction">
    <interactant intactId="EBI-7713653">
        <id>Q8K430</id>
    </interactant>
    <interactant intactId="EBI-7713572">
        <id>Q9JJ40</id>
        <label>Pdzk1</label>
    </interactant>
    <organismsDiffer>false</organismsDiffer>
    <experiments>10</experiments>
</comment>
<comment type="interaction">
    <interactant intactId="EBI-7713653">
        <id>Q8K430</id>
    </interactant>
    <interactant intactId="EBI-2310349">
        <id>Q9QUH6</id>
        <label>Syngap1</label>
    </interactant>
    <organismsDiffer>false</organismsDiffer>
    <experiments>2</experiments>
</comment>
<comment type="interaction">
    <interactant intactId="EBI-7713653">
        <id>Q8K430</id>
    </interactant>
    <interactant intactId="EBI-16737024">
        <id>Q8CC35-3</id>
        <label>Synpo</label>
    </interactant>
    <organismsDiffer>true</organismsDiffer>
    <experiments>3</experiments>
</comment>
<comment type="subcellular location">
    <subcellularLocation>
        <location evidence="3">Postsynaptic density</location>
    </subcellularLocation>
    <subcellularLocation>
        <location evidence="3">Synapse</location>
    </subcellularLocation>
</comment>
<comment type="tissue specificity">
    <text evidence="3">Brain specific. Broadly expressed in neurons of most regions of the brain.</text>
</comment>
<organism>
    <name type="scientific">Rattus norvegicus</name>
    <name type="common">Rat</name>
    <dbReference type="NCBI Taxonomy" id="10116"/>
    <lineage>
        <taxon>Eukaryota</taxon>
        <taxon>Metazoa</taxon>
        <taxon>Chordata</taxon>
        <taxon>Craniata</taxon>
        <taxon>Vertebrata</taxon>
        <taxon>Euteleostomi</taxon>
        <taxon>Mammalia</taxon>
        <taxon>Eutheria</taxon>
        <taxon>Euarchontoglires</taxon>
        <taxon>Glires</taxon>
        <taxon>Rodentia</taxon>
        <taxon>Myomorpha</taxon>
        <taxon>Muroidea</taxon>
        <taxon>Muridae</taxon>
        <taxon>Murinae</taxon>
        <taxon>Rattus</taxon>
    </lineage>
</organism>
<protein>
    <recommendedName>
        <fullName>Kelch-like protein 17</fullName>
    </recommendedName>
    <alternativeName>
        <fullName>Actinfilin</fullName>
    </alternativeName>
</protein>
<evidence type="ECO:0000255" key="1">
    <source>
        <dbReference type="PROSITE-ProRule" id="PRU00037"/>
    </source>
</evidence>
<evidence type="ECO:0000256" key="2">
    <source>
        <dbReference type="SAM" id="MobiDB-lite"/>
    </source>
</evidence>
<evidence type="ECO:0000269" key="3">
    <source>
    </source>
</evidence>
<evidence type="ECO:0000269" key="4">
    <source>
    </source>
</evidence>
<evidence type="ECO:0000269" key="5">
    <source>
    </source>
</evidence>
<proteinExistence type="evidence at protein level"/>
<keyword id="KW-0009">Actin-binding</keyword>
<keyword id="KW-0880">Kelch repeat</keyword>
<keyword id="KW-1185">Reference proteome</keyword>
<keyword id="KW-0677">Repeat</keyword>
<keyword id="KW-0770">Synapse</keyword>
<keyword id="KW-0833">Ubl conjugation pathway</keyword>
<gene>
    <name type="primary">Klhl17</name>
</gene>
<name>KLH17_RAT</name>
<feature type="chain" id="PRO_0000119121" description="Kelch-like protein 17">
    <location>
        <begin position="1"/>
        <end position="640"/>
    </location>
</feature>
<feature type="domain" description="BTB" evidence="1">
    <location>
        <begin position="90"/>
        <end position="157"/>
    </location>
</feature>
<feature type="domain" description="BACK">
    <location>
        <begin position="192"/>
        <end position="294"/>
    </location>
</feature>
<feature type="repeat" description="Kelch 1">
    <location>
        <begin position="341"/>
        <end position="387"/>
    </location>
</feature>
<feature type="repeat" description="Kelch 2">
    <location>
        <begin position="388"/>
        <end position="434"/>
    </location>
</feature>
<feature type="repeat" description="Kelch 3">
    <location>
        <begin position="436"/>
        <end position="481"/>
    </location>
</feature>
<feature type="repeat" description="Kelch 4">
    <location>
        <begin position="482"/>
        <end position="528"/>
    </location>
</feature>
<feature type="repeat" description="Kelch 5">
    <location>
        <begin position="530"/>
        <end position="575"/>
    </location>
</feature>
<feature type="repeat" description="Kelch 6">
    <location>
        <begin position="576"/>
        <end position="622"/>
    </location>
</feature>
<feature type="region of interest" description="Disordered" evidence="2">
    <location>
        <begin position="1"/>
        <end position="50"/>
    </location>
</feature>
<feature type="region of interest" description="Interaction with F-actin">
    <location>
        <begin position="287"/>
        <end position="639"/>
    </location>
</feature>
<feature type="region of interest" description="Interaction with PDZK1" evidence="4">
    <location>
        <begin position="638"/>
        <end position="640"/>
    </location>
</feature>
<feature type="compositionally biased region" description="Pro residues" evidence="2">
    <location>
        <begin position="21"/>
        <end position="35"/>
    </location>
</feature>
<feature type="mutagenesis site" description="No interaction with PDZK1." evidence="4">
    <location>
        <begin position="638"/>
        <end position="640"/>
    </location>
</feature>
<sequence>MQPRGERPAGRTQSPEHSSPGPGPEAPPPPQPPAPEAERARPRQARPAAPMEGAMQLLSREGHSVAHNSKRHYHDAFVAMSRMRQRGLLCDIVLHVAAKEIRAHKVVLASCSPYFHAMFTNEMSESRQTHVTLHDIDPQALDQLVQFAYTAEIVVGEGNVQTLLPAASLLQLNGVRDACCKFLLSQLDPSNCLGIRGFADTHSCSDLLKAAHRYVLQHFVDVAKTEEFMLLPLKQVLELVSSDSLNVPSEEDVYRAVLSWVKHDVDTRRQHVPRLMKCVRLPLLSRDFLLGHVDAESLVRHHPDCKDLLIEALKFHLLPEQRGVLGTSRTRPRRCEGAGPVLFAVGGGSLFAIHGDCEAYDTRTDRWHVVASMSTRRARVGVAAVGNRLYAVGGYDGTSDLATVESYDPVTNTWQPEVSMGTRRSCLGVAALHGLLYAAGGYDGASCLNSAERYDPLTGTWTSIAAMSTRRRYVRVATLDGNLYAVGGYDSSSHLATVEKYEPQVNSWTPVASMLSRRSSAGVAVLEGALYVAGGNDGTSCLNSVERYSTKAGAWESVAPMNIRRSTHDLVAMDGWLYAVGGNDGSSSLNSIEKYNPRTNKWVAASCMFTRRSSVGVAVLELLNFPPPSSPTLSVSSTSL</sequence>
<reference key="1">
    <citation type="journal article" date="2002" name="J. Biol. Chem.">
        <title>Actinfilin, a brain-specific actin-binding protein in postsynaptic density.</title>
        <authorList>
            <person name="Chen Y."/>
            <person name="Derin R."/>
            <person name="Petralia R.S."/>
            <person name="Li M."/>
        </authorList>
    </citation>
    <scope>NUCLEOTIDE SEQUENCE [MRNA]</scope>
    <scope>SUBCELLULAR LOCATION</scope>
    <scope>TISSUE SPECIFICITY</scope>
    <scope>INTERACTION WITH ACTIN</scope>
    <source>
        <strain>Sprague-Dawley</strain>
    </source>
</reference>
<reference key="2">
    <citation type="journal article" date="2005" name="Neuropharmacology">
        <title>Interactions between CAP70 and actinfilin are important for integrity of actin cytoskeleton structures in neurons.</title>
        <authorList>
            <person name="Chen Y."/>
            <person name="Li M."/>
        </authorList>
    </citation>
    <scope>INTERACTION WITH PDZK1; DLG4; SYNGAP1 AND F-ACTIN</scope>
    <scope>MUTAGENESIS OF 638-THR--LEU-640</scope>
</reference>
<reference key="3">
    <citation type="journal article" date="2006" name="J. Biol. Chem.">
        <title>Actinfilin is a Cul3 substrate adaptor, linking GluR6 kainate receptor subunits to the ubiquitin-proteasome pathway.</title>
        <authorList>
            <person name="Salinas G.D."/>
            <person name="Blair L.A."/>
            <person name="Needleman L.A."/>
            <person name="Gonzales J.D."/>
            <person name="Chen Y."/>
            <person name="Li M."/>
            <person name="Singer J.D."/>
            <person name="Marshall J."/>
        </authorList>
    </citation>
    <scope>FUNCTION</scope>
    <scope>INTERACTION WITH GRIK2; GRIK1 AND CUL3</scope>
</reference>
<dbReference type="EMBL" id="AF505655">
    <property type="protein sequence ID" value="AAM74154.1"/>
    <property type="molecule type" value="mRNA"/>
</dbReference>
<dbReference type="RefSeq" id="NP_663704.1">
    <property type="nucleotide sequence ID" value="NM_145671.2"/>
</dbReference>
<dbReference type="SMR" id="Q8K430"/>
<dbReference type="BioGRID" id="251611">
    <property type="interactions" value="8"/>
</dbReference>
<dbReference type="ELM" id="Q8K430"/>
<dbReference type="FunCoup" id="Q8K430">
    <property type="interactions" value="219"/>
</dbReference>
<dbReference type="IntAct" id="Q8K430">
    <property type="interactions" value="6"/>
</dbReference>
<dbReference type="MINT" id="Q8K430"/>
<dbReference type="STRING" id="10116.ENSRNOP00000027547"/>
<dbReference type="PhosphoSitePlus" id="Q8K430"/>
<dbReference type="PaxDb" id="10116-ENSRNOP00000027547"/>
<dbReference type="Ensembl" id="ENSRNOT00000027547.6">
    <property type="protein sequence ID" value="ENSRNOP00000027547.4"/>
    <property type="gene ID" value="ENSRNOG00000020302.7"/>
</dbReference>
<dbReference type="GeneID" id="246757"/>
<dbReference type="KEGG" id="rno:246757"/>
<dbReference type="AGR" id="RGD:708444"/>
<dbReference type="CTD" id="339451"/>
<dbReference type="RGD" id="708444">
    <property type="gene designation" value="Klhl17"/>
</dbReference>
<dbReference type="eggNOG" id="KOG4441">
    <property type="taxonomic scope" value="Eukaryota"/>
</dbReference>
<dbReference type="GeneTree" id="ENSGT00940000157635"/>
<dbReference type="HOGENOM" id="CLU_004253_14_1_1"/>
<dbReference type="InParanoid" id="Q8K430"/>
<dbReference type="OMA" id="RRNCWEP"/>
<dbReference type="OrthoDB" id="45365at2759"/>
<dbReference type="PhylomeDB" id="Q8K430"/>
<dbReference type="TreeFam" id="TF329218"/>
<dbReference type="UniPathway" id="UPA00143"/>
<dbReference type="PRO" id="PR:Q8K430"/>
<dbReference type="Proteomes" id="UP000002494">
    <property type="component" value="Chromosome 5"/>
</dbReference>
<dbReference type="Bgee" id="ENSRNOG00000020302">
    <property type="expression patterns" value="Expressed in cerebellum and 19 other cell types or tissues"/>
</dbReference>
<dbReference type="GO" id="GO:0015629">
    <property type="term" value="C:actin cytoskeleton"/>
    <property type="evidence" value="ECO:0000314"/>
    <property type="project" value="UniProtKB"/>
</dbReference>
<dbReference type="GO" id="GO:0031463">
    <property type="term" value="C:Cul3-RING ubiquitin ligase complex"/>
    <property type="evidence" value="ECO:0000318"/>
    <property type="project" value="GO_Central"/>
</dbReference>
<dbReference type="GO" id="GO:0005737">
    <property type="term" value="C:cytoplasm"/>
    <property type="evidence" value="ECO:0000318"/>
    <property type="project" value="GO_Central"/>
</dbReference>
<dbReference type="GO" id="GO:0032839">
    <property type="term" value="C:dendrite cytoplasm"/>
    <property type="evidence" value="ECO:0000314"/>
    <property type="project" value="RGD"/>
</dbReference>
<dbReference type="GO" id="GO:0098978">
    <property type="term" value="C:glutamatergic synapse"/>
    <property type="evidence" value="ECO:0000314"/>
    <property type="project" value="SynGO"/>
</dbReference>
<dbReference type="GO" id="GO:0043025">
    <property type="term" value="C:neuronal cell body"/>
    <property type="evidence" value="ECO:0000314"/>
    <property type="project" value="RGD"/>
</dbReference>
<dbReference type="GO" id="GO:0098794">
    <property type="term" value="C:postsynapse"/>
    <property type="evidence" value="ECO:0000314"/>
    <property type="project" value="SynGO"/>
</dbReference>
<dbReference type="GO" id="GO:0014069">
    <property type="term" value="C:postsynaptic density"/>
    <property type="evidence" value="ECO:0007669"/>
    <property type="project" value="UniProtKB-SubCell"/>
</dbReference>
<dbReference type="GO" id="GO:0051015">
    <property type="term" value="F:actin filament binding"/>
    <property type="evidence" value="ECO:0000314"/>
    <property type="project" value="RGD"/>
</dbReference>
<dbReference type="GO" id="GO:0060090">
    <property type="term" value="F:molecular adaptor activity"/>
    <property type="evidence" value="ECO:0000314"/>
    <property type="project" value="UniProtKB"/>
</dbReference>
<dbReference type="GO" id="GO:0031208">
    <property type="term" value="F:POZ domain binding"/>
    <property type="evidence" value="ECO:0000353"/>
    <property type="project" value="RGD"/>
</dbReference>
<dbReference type="GO" id="GO:1990756">
    <property type="term" value="F:ubiquitin-like ligase-substrate adaptor activity"/>
    <property type="evidence" value="ECO:0000318"/>
    <property type="project" value="GO_Central"/>
</dbReference>
<dbReference type="GO" id="GO:0030036">
    <property type="term" value="P:actin cytoskeleton organization"/>
    <property type="evidence" value="ECO:0000314"/>
    <property type="project" value="UniProtKB"/>
</dbReference>
<dbReference type="GO" id="GO:0043161">
    <property type="term" value="P:proteasome-mediated ubiquitin-dependent protein catabolic process"/>
    <property type="evidence" value="ECO:0000318"/>
    <property type="project" value="GO_Central"/>
</dbReference>
<dbReference type="GO" id="GO:0016567">
    <property type="term" value="P:protein ubiquitination"/>
    <property type="evidence" value="ECO:0007669"/>
    <property type="project" value="UniProtKB-UniPathway"/>
</dbReference>
<dbReference type="GO" id="GO:0140252">
    <property type="term" value="P:regulation protein catabolic process at postsynapse"/>
    <property type="evidence" value="ECO:0000314"/>
    <property type="project" value="SynGO"/>
</dbReference>
<dbReference type="CDD" id="cd18246">
    <property type="entry name" value="BTB_POZ_KLHL17_actinfilin"/>
    <property type="match status" value="1"/>
</dbReference>
<dbReference type="FunFam" id="1.25.40.420:FF:000001">
    <property type="entry name" value="Kelch-like family member 12"/>
    <property type="match status" value="1"/>
</dbReference>
<dbReference type="FunFam" id="2.120.10.80:FF:000019">
    <property type="entry name" value="Kelch-like family member 17"/>
    <property type="match status" value="1"/>
</dbReference>
<dbReference type="FunFam" id="2.120.10.80:FF:000029">
    <property type="entry name" value="Kelch-like family member 17"/>
    <property type="match status" value="1"/>
</dbReference>
<dbReference type="FunFam" id="3.30.710.10:FF:000001">
    <property type="entry name" value="Kelch-like family member 20"/>
    <property type="match status" value="1"/>
</dbReference>
<dbReference type="Gene3D" id="1.25.40.420">
    <property type="match status" value="1"/>
</dbReference>
<dbReference type="Gene3D" id="2.120.10.80">
    <property type="entry name" value="Kelch-type beta propeller"/>
    <property type="match status" value="2"/>
</dbReference>
<dbReference type="Gene3D" id="3.30.710.10">
    <property type="entry name" value="Potassium Channel Kv1.1, Chain A"/>
    <property type="match status" value="1"/>
</dbReference>
<dbReference type="InterPro" id="IPR011705">
    <property type="entry name" value="BACK"/>
</dbReference>
<dbReference type="InterPro" id="IPR017096">
    <property type="entry name" value="BTB-kelch_protein"/>
</dbReference>
<dbReference type="InterPro" id="IPR000210">
    <property type="entry name" value="BTB/POZ_dom"/>
</dbReference>
<dbReference type="InterPro" id="IPR011043">
    <property type="entry name" value="Gal_Oxase/kelch_b-propeller"/>
</dbReference>
<dbReference type="InterPro" id="IPR015915">
    <property type="entry name" value="Kelch-typ_b-propeller"/>
</dbReference>
<dbReference type="InterPro" id="IPR006652">
    <property type="entry name" value="Kelch_1"/>
</dbReference>
<dbReference type="InterPro" id="IPR011333">
    <property type="entry name" value="SKP1/BTB/POZ_sf"/>
</dbReference>
<dbReference type="PANTHER" id="PTHR24412">
    <property type="entry name" value="KELCH PROTEIN"/>
    <property type="match status" value="1"/>
</dbReference>
<dbReference type="PANTHER" id="PTHR24412:SF475">
    <property type="entry name" value="KELCH-LIKE PROTEIN 17"/>
    <property type="match status" value="1"/>
</dbReference>
<dbReference type="Pfam" id="PF07707">
    <property type="entry name" value="BACK"/>
    <property type="match status" value="1"/>
</dbReference>
<dbReference type="Pfam" id="PF00651">
    <property type="entry name" value="BTB"/>
    <property type="match status" value="1"/>
</dbReference>
<dbReference type="Pfam" id="PF01344">
    <property type="entry name" value="Kelch_1"/>
    <property type="match status" value="5"/>
</dbReference>
<dbReference type="PIRSF" id="PIRSF037037">
    <property type="entry name" value="Kelch-like_protein_gigaxonin"/>
    <property type="match status" value="1"/>
</dbReference>
<dbReference type="PRINTS" id="PR00501">
    <property type="entry name" value="KELCHREPEAT"/>
</dbReference>
<dbReference type="SMART" id="SM00875">
    <property type="entry name" value="BACK"/>
    <property type="match status" value="1"/>
</dbReference>
<dbReference type="SMART" id="SM00225">
    <property type="entry name" value="BTB"/>
    <property type="match status" value="1"/>
</dbReference>
<dbReference type="SMART" id="SM00612">
    <property type="entry name" value="Kelch"/>
    <property type="match status" value="6"/>
</dbReference>
<dbReference type="SUPFAM" id="SSF50965">
    <property type="entry name" value="Galactose oxidase, central domain"/>
    <property type="match status" value="1"/>
</dbReference>
<dbReference type="SUPFAM" id="SSF54695">
    <property type="entry name" value="POZ domain"/>
    <property type="match status" value="1"/>
</dbReference>
<dbReference type="PROSITE" id="PS50097">
    <property type="entry name" value="BTB"/>
    <property type="match status" value="1"/>
</dbReference>
<accession>Q8K430</accession>